<protein>
    <recommendedName>
        <fullName evidence="5">Pleckstrin homology domain-containing family G member 7</fullName>
        <shortName>PH domain-containing family G member 7</shortName>
    </recommendedName>
</protein>
<gene>
    <name evidence="6" type="primary">PLEKHG7</name>
    <name evidence="6" type="synonym">C12orf74</name>
</gene>
<keyword id="KW-0025">Alternative splicing</keyword>
<keyword id="KW-0325">Glycoprotein</keyword>
<keyword id="KW-1267">Proteomics identification</keyword>
<keyword id="KW-1185">Reference proteome</keyword>
<dbReference type="EMBL" id="AC016136">
    <property type="status" value="NOT_ANNOTATED_CDS"/>
    <property type="molecule type" value="Genomic_DNA"/>
</dbReference>
<dbReference type="EMBL" id="BC043363">
    <property type="status" value="NOT_ANNOTATED_CDS"/>
    <property type="molecule type" value="mRNA"/>
</dbReference>
<dbReference type="EMBL" id="BC105728">
    <property type="protein sequence ID" value="AAI05729.1"/>
    <property type="molecule type" value="mRNA"/>
</dbReference>
<dbReference type="EMBL" id="BC107813">
    <property type="protein sequence ID" value="AAI07814.1"/>
    <property type="molecule type" value="mRNA"/>
</dbReference>
<dbReference type="EMBL" id="BC137086">
    <property type="protein sequence ID" value="AAI37087.1"/>
    <property type="status" value="ALT_INIT"/>
    <property type="molecule type" value="mRNA"/>
</dbReference>
<dbReference type="EMBL" id="AK128530">
    <property type="protein sequence ID" value="BAC87483.1"/>
    <property type="status" value="ALT_INIT"/>
    <property type="molecule type" value="mRNA"/>
</dbReference>
<dbReference type="CCDS" id="CCDS41819.1">
    <molecule id="Q6ZR37-2"/>
</dbReference>
<dbReference type="CCDS" id="CCDS53818.1">
    <molecule id="Q6ZR37-3"/>
</dbReference>
<dbReference type="CCDS" id="CCDS91737.1">
    <molecule id="Q6ZR37-1"/>
</dbReference>
<dbReference type="RefSeq" id="NP_001004330.1">
    <property type="nucleotide sequence ID" value="NM_001004330.2"/>
</dbReference>
<dbReference type="RefSeq" id="NP_001032760.1">
    <molecule id="Q6ZR37-2"/>
    <property type="nucleotide sequence ID" value="NM_001037671.4"/>
</dbReference>
<dbReference type="RefSeq" id="NP_001171568.1">
    <molecule id="Q6ZR37-3"/>
    <property type="nucleotide sequence ID" value="NM_001178097.3"/>
</dbReference>
<dbReference type="RefSeq" id="NP_001364258.1">
    <molecule id="Q6ZR37-1"/>
    <property type="nucleotide sequence ID" value="NM_001377329.1"/>
</dbReference>
<dbReference type="SMR" id="Q6ZR37"/>
<dbReference type="BioGRID" id="130800">
    <property type="interactions" value="168"/>
</dbReference>
<dbReference type="BioGRID" id="136300">
    <property type="interactions" value="25"/>
</dbReference>
<dbReference type="FunCoup" id="Q6ZR37">
    <property type="interactions" value="30"/>
</dbReference>
<dbReference type="IntAct" id="Q6ZR37">
    <property type="interactions" value="161"/>
</dbReference>
<dbReference type="STRING" id="9606.ENSP00000492692"/>
<dbReference type="GlyCosmos" id="Q6ZR37">
    <property type="glycosylation" value="1 site, No reported glycans"/>
</dbReference>
<dbReference type="GlyGen" id="Q6ZR37">
    <property type="glycosylation" value="1 site"/>
</dbReference>
<dbReference type="iPTMnet" id="Q6ZR37"/>
<dbReference type="PhosphoSitePlus" id="Q6ZR37"/>
<dbReference type="BioMuta" id="C12orf74"/>
<dbReference type="BioMuta" id="PLEKHG7"/>
<dbReference type="DMDM" id="74758773"/>
<dbReference type="jPOST" id="Q6ZR37"/>
<dbReference type="MassIVE" id="Q6ZR37"/>
<dbReference type="PaxDb" id="9606-ENSP00000380933"/>
<dbReference type="PeptideAtlas" id="Q6ZR37"/>
<dbReference type="ProteomicsDB" id="26631"/>
<dbReference type="ProteomicsDB" id="61630"/>
<dbReference type="Antibodypedia" id="66814">
    <property type="antibodies" value="16 antibodies from 7 providers"/>
</dbReference>
<dbReference type="DNASU" id="440107"/>
<dbReference type="Ensembl" id="ENST00000344636.6">
    <molecule id="Q6ZR37-1"/>
    <property type="protein sequence ID" value="ENSP00000344961.5"/>
    <property type="gene ID" value="ENSG00000187510.11"/>
</dbReference>
<dbReference type="Ensembl" id="ENST00000397833.3">
    <molecule id="Q6ZR37-2"/>
    <property type="protein sequence ID" value="ENSP00000380933.3"/>
    <property type="gene ID" value="ENSG00000187510.11"/>
</dbReference>
<dbReference type="Ensembl" id="ENST00000544406.2">
    <molecule id="Q6ZR37-3"/>
    <property type="protein sequence ID" value="ENSP00000446043.2"/>
    <property type="gene ID" value="ENSG00000187510.11"/>
</dbReference>
<dbReference type="GeneID" id="440107"/>
<dbReference type="KEGG" id="hsa:440107"/>
<dbReference type="MANE-Select" id="ENST00000344636.6">
    <property type="protein sequence ID" value="ENSP00000344961.5"/>
    <property type="RefSeq nucleotide sequence ID" value="NM_001377329.1"/>
    <property type="RefSeq protein sequence ID" value="NP_001364258.1"/>
</dbReference>
<dbReference type="UCSC" id="uc001tcj.3">
    <molecule id="Q6ZR37-1"/>
    <property type="organism name" value="human"/>
</dbReference>
<dbReference type="AGR" id="HGNC:33829"/>
<dbReference type="CTD" id="440107"/>
<dbReference type="DisGeNET" id="440107"/>
<dbReference type="GeneCards" id="PLEKHG7"/>
<dbReference type="HGNC" id="HGNC:33829">
    <property type="gene designation" value="PLEKHG7"/>
</dbReference>
<dbReference type="HPA" id="ENSG00000187510">
    <property type="expression patterns" value="Tissue enhanced (epididymis, fallopian tube)"/>
</dbReference>
<dbReference type="neXtProt" id="NX_Q6ZR37"/>
<dbReference type="OpenTargets" id="ENSG00000187510"/>
<dbReference type="PharmGKB" id="PA162399708"/>
<dbReference type="VEuPathDB" id="HostDB:ENSG00000187510"/>
<dbReference type="eggNOG" id="ENOG502S9PS">
    <property type="taxonomic scope" value="Eukaryota"/>
</dbReference>
<dbReference type="eggNOG" id="KOG3521">
    <property type="taxonomic scope" value="Eukaryota"/>
</dbReference>
<dbReference type="GeneTree" id="ENSGT00510000046843"/>
<dbReference type="HOGENOM" id="CLU_030833_0_0_1"/>
<dbReference type="InParanoid" id="Q6ZR37"/>
<dbReference type="OMA" id="QEKEHCH"/>
<dbReference type="OrthoDB" id="5585231at2759"/>
<dbReference type="PAN-GO" id="Q6ZR37">
    <property type="GO annotations" value="1 GO annotation based on evolutionary models"/>
</dbReference>
<dbReference type="PhylomeDB" id="Q6ZR37"/>
<dbReference type="TreeFam" id="TF316247"/>
<dbReference type="TreeFam" id="TF353652"/>
<dbReference type="PathwayCommons" id="Q6ZR37"/>
<dbReference type="SignaLink" id="Q6ZR37"/>
<dbReference type="BioGRID-ORCS" id="338809">
    <property type="hits" value="9 hits in 1101 CRISPR screens"/>
</dbReference>
<dbReference type="BioGRID-ORCS" id="440107">
    <property type="hits" value="9 hits in 1135 CRISPR screens"/>
</dbReference>
<dbReference type="ChiTaRS" id="PLEKHG7">
    <property type="organism name" value="human"/>
</dbReference>
<dbReference type="GenomeRNAi" id="440107"/>
<dbReference type="Pharos" id="Q6ZR37">
    <property type="development level" value="Tdark"/>
</dbReference>
<dbReference type="PRO" id="PR:Q6ZR37"/>
<dbReference type="Proteomes" id="UP000005640">
    <property type="component" value="Chromosome 12"/>
</dbReference>
<dbReference type="RNAct" id="Q6ZR37">
    <property type="molecule type" value="protein"/>
</dbReference>
<dbReference type="GO" id="GO:0005085">
    <property type="term" value="F:guanyl-nucleotide exchange factor activity"/>
    <property type="evidence" value="ECO:0007669"/>
    <property type="project" value="InterPro"/>
</dbReference>
<dbReference type="GO" id="GO:0007266">
    <property type="term" value="P:Rho protein signal transduction"/>
    <property type="evidence" value="ECO:0000318"/>
    <property type="project" value="GO_Central"/>
</dbReference>
<dbReference type="CDD" id="cd13245">
    <property type="entry name" value="PH_PLEKHG7"/>
    <property type="match status" value="1"/>
</dbReference>
<dbReference type="Gene3D" id="1.20.900.10">
    <property type="entry name" value="Dbl homology (DH) domain"/>
    <property type="match status" value="1"/>
</dbReference>
<dbReference type="Gene3D" id="2.30.29.30">
    <property type="entry name" value="Pleckstrin-homology domain (PH domain)/Phosphotyrosine-binding domain (PTB)"/>
    <property type="match status" value="1"/>
</dbReference>
<dbReference type="InterPro" id="IPR035899">
    <property type="entry name" value="DBL_dom_sf"/>
</dbReference>
<dbReference type="InterPro" id="IPR000219">
    <property type="entry name" value="DH_dom"/>
</dbReference>
<dbReference type="InterPro" id="IPR011993">
    <property type="entry name" value="PH-like_dom_sf"/>
</dbReference>
<dbReference type="InterPro" id="IPR001849">
    <property type="entry name" value="PH_domain"/>
</dbReference>
<dbReference type="InterPro" id="IPR040181">
    <property type="entry name" value="PKHG5/7"/>
</dbReference>
<dbReference type="PANTHER" id="PTHR13217">
    <property type="entry name" value="PLECKSTRIN HOMOLOGY DOMAIN-CONTAINING FAMILY G MEMBER 7"/>
    <property type="match status" value="1"/>
</dbReference>
<dbReference type="PANTHER" id="PTHR13217:SF6">
    <property type="entry name" value="PLECKSTRIN HOMOLOGY DOMAIN-CONTAINING FAMILY G MEMBER 7"/>
    <property type="match status" value="1"/>
</dbReference>
<dbReference type="Pfam" id="PF15720">
    <property type="entry name" value="DUF4675"/>
    <property type="match status" value="1"/>
</dbReference>
<dbReference type="Pfam" id="PF16652">
    <property type="entry name" value="PH_13"/>
    <property type="match status" value="1"/>
</dbReference>
<dbReference type="Pfam" id="PF00621">
    <property type="entry name" value="RhoGEF"/>
    <property type="match status" value="1"/>
</dbReference>
<dbReference type="SMART" id="SM00233">
    <property type="entry name" value="PH"/>
    <property type="match status" value="1"/>
</dbReference>
<dbReference type="SMART" id="SM00325">
    <property type="entry name" value="RhoGEF"/>
    <property type="match status" value="1"/>
</dbReference>
<dbReference type="SUPFAM" id="SSF48065">
    <property type="entry name" value="DBL homology domain (DH-domain)"/>
    <property type="match status" value="1"/>
</dbReference>
<dbReference type="SUPFAM" id="SSF50729">
    <property type="entry name" value="PH domain-like"/>
    <property type="match status" value="1"/>
</dbReference>
<dbReference type="PROSITE" id="PS50010">
    <property type="entry name" value="DH_2"/>
    <property type="match status" value="1"/>
</dbReference>
<dbReference type="PROSITE" id="PS50003">
    <property type="entry name" value="PH_DOMAIN"/>
    <property type="match status" value="1"/>
</dbReference>
<feature type="chain" id="PRO_0000317287" description="Pleckstrin homology domain-containing family G member 7">
    <location>
        <begin position="1"/>
        <end position="691"/>
    </location>
</feature>
<feature type="domain" description="DH" evidence="2">
    <location>
        <begin position="313"/>
        <end position="488"/>
    </location>
</feature>
<feature type="domain" description="PH" evidence="3">
    <location>
        <begin position="535"/>
        <end position="668"/>
    </location>
</feature>
<feature type="region of interest" description="Disordered" evidence="4">
    <location>
        <begin position="1"/>
        <end position="48"/>
    </location>
</feature>
<feature type="region of interest" description="Disordered" evidence="4">
    <location>
        <begin position="109"/>
        <end position="140"/>
    </location>
</feature>
<feature type="glycosylation site" description="N-linked (GlcNAc...) asparagine" evidence="1">
    <location>
        <position position="395"/>
    </location>
</feature>
<feature type="splice variant" id="VSP_061133" description="In isoform 3.">
    <original>GEEL</original>
    <variation>VTQL</variation>
    <location>
        <begin position="170"/>
        <end position="173"/>
    </location>
</feature>
<feature type="splice variant" id="VSP_061134" description="In isoform 3.">
    <location>
        <begin position="174"/>
        <end position="691"/>
    </location>
</feature>
<feature type="splice variant" id="VSP_061135" description="In isoform 2.">
    <original>FYEHRRSSVVLNL</original>
    <variation>CVCIYFLRCYDIC</variation>
    <location>
        <begin position="178"/>
        <end position="190"/>
    </location>
</feature>
<feature type="splice variant" id="VSP_061136" description="In isoform 2.">
    <location>
        <begin position="191"/>
        <end position="691"/>
    </location>
</feature>
<feature type="sequence variant" id="VAR_050513" description="In dbSNP:rs17790310.">
    <original>D</original>
    <variation>G</variation>
    <location>
        <position position="411"/>
    </location>
</feature>
<feature type="sequence variant" id="VAR_050514" description="In dbSNP:rs924326.">
    <original>M</original>
    <variation>T</variation>
    <location>
        <position position="524"/>
    </location>
</feature>
<name>PKHG7_HUMAN</name>
<organism>
    <name type="scientific">Homo sapiens</name>
    <name type="common">Human</name>
    <dbReference type="NCBI Taxonomy" id="9606"/>
    <lineage>
        <taxon>Eukaryota</taxon>
        <taxon>Metazoa</taxon>
        <taxon>Chordata</taxon>
        <taxon>Craniata</taxon>
        <taxon>Vertebrata</taxon>
        <taxon>Euteleostomi</taxon>
        <taxon>Mammalia</taxon>
        <taxon>Eutheria</taxon>
        <taxon>Euarchontoglires</taxon>
        <taxon>Primates</taxon>
        <taxon>Haplorrhini</taxon>
        <taxon>Catarrhini</taxon>
        <taxon>Hominidae</taxon>
        <taxon>Homo</taxon>
    </lineage>
</organism>
<evidence type="ECO:0000255" key="1"/>
<evidence type="ECO:0000255" key="2">
    <source>
        <dbReference type="PROSITE-ProRule" id="PRU00062"/>
    </source>
</evidence>
<evidence type="ECO:0000255" key="3">
    <source>
        <dbReference type="PROSITE-ProRule" id="PRU00145"/>
    </source>
</evidence>
<evidence type="ECO:0000256" key="4">
    <source>
        <dbReference type="SAM" id="MobiDB-lite"/>
    </source>
</evidence>
<evidence type="ECO:0000305" key="5"/>
<evidence type="ECO:0000312" key="6">
    <source>
        <dbReference type="HGNC" id="HGNC:33829"/>
    </source>
</evidence>
<proteinExistence type="evidence at protein level"/>
<comment type="interaction">
    <interactant intactId="EBI-12891828">
        <id>Q6ZR37</id>
    </interactant>
    <interactant intactId="EBI-727098">
        <id>P21549</id>
        <label>AGXT</label>
    </interactant>
    <organismsDiffer>false</organismsDiffer>
    <experiments>3</experiments>
</comment>
<comment type="interaction">
    <interactant intactId="EBI-12891828">
        <id>Q6ZR37</id>
    </interactant>
    <interactant intactId="EBI-21535880">
        <id>Q92870-2</id>
        <label>APBB2</label>
    </interactant>
    <organismsDiffer>false</organismsDiffer>
    <experiments>3</experiments>
</comment>
<comment type="interaction">
    <interactant intactId="EBI-12891828">
        <id>Q6ZR37</id>
    </interactant>
    <interactant intactId="EBI-930964">
        <id>P54253</id>
        <label>ATXN1</label>
    </interactant>
    <organismsDiffer>false</organismsDiffer>
    <experiments>6</experiments>
</comment>
<comment type="interaction">
    <interactant intactId="EBI-12891828">
        <id>Q6ZR37</id>
    </interactant>
    <interactant intactId="EBI-355710">
        <id>P48643</id>
        <label>CCT5</label>
    </interactant>
    <organismsDiffer>false</organismsDiffer>
    <experiments>3</experiments>
</comment>
<comment type="interaction">
    <interactant intactId="EBI-12891828">
        <id>Q6ZR37</id>
    </interactant>
    <interactant intactId="EBI-10976677">
        <id>G5E9A7</id>
        <label>DMWD</label>
    </interactant>
    <organismsDiffer>false</organismsDiffer>
    <experiments>3</experiments>
</comment>
<comment type="interaction">
    <interactant intactId="EBI-12891828">
        <id>Q6ZR37</id>
    </interactant>
    <interactant intactId="EBI-348399">
        <id>P22607</id>
        <label>FGFR3</label>
    </interactant>
    <organismsDiffer>false</organismsDiffer>
    <experiments>3</experiments>
</comment>
<comment type="interaction">
    <interactant intactId="EBI-12891828">
        <id>Q6ZR37</id>
    </interactant>
    <interactant intactId="EBI-8285963">
        <id>Q14957</id>
        <label>GRIN2C</label>
    </interactant>
    <organismsDiffer>false</organismsDiffer>
    <experiments>3</experiments>
</comment>
<comment type="interaction">
    <interactant intactId="EBI-12891828">
        <id>Q6ZR37</id>
    </interactant>
    <interactant intactId="EBI-747754">
        <id>P28799</id>
        <label>GRN</label>
    </interactant>
    <organismsDiffer>false</organismsDiffer>
    <experiments>3</experiments>
</comment>
<comment type="interaction">
    <interactant intactId="EBI-12891828">
        <id>Q6ZR37</id>
    </interactant>
    <interactant intactId="EBI-351506">
        <id>P06396</id>
        <label>GSN</label>
    </interactant>
    <organismsDiffer>false</organismsDiffer>
    <experiments>3</experiments>
</comment>
<comment type="interaction">
    <interactant intactId="EBI-12891828">
        <id>Q6ZR37</id>
    </interactant>
    <interactant intactId="EBI-352682">
        <id>P04792</id>
        <label>HSPB1</label>
    </interactant>
    <organismsDiffer>false</organismsDiffer>
    <experiments>3</experiments>
</comment>
<comment type="interaction">
    <interactant intactId="EBI-12891828">
        <id>Q6ZR37</id>
    </interactant>
    <interactant intactId="EBI-466029">
        <id>P42858</id>
        <label>HTT</label>
    </interactant>
    <organismsDiffer>false</organismsDiffer>
    <experiments>12</experiments>
</comment>
<comment type="interaction">
    <interactant intactId="EBI-12891828">
        <id>Q6ZR37</id>
    </interactant>
    <interactant intactId="EBI-10975473">
        <id>O60333-2</id>
        <label>KIF1B</label>
    </interactant>
    <organismsDiffer>false</organismsDiffer>
    <experiments>3</experiments>
</comment>
<comment type="interaction">
    <interactant intactId="EBI-12891828">
        <id>Q6ZR37</id>
    </interactant>
    <interactant intactId="EBI-1014472">
        <id>P35240</id>
        <label>NF2</label>
    </interactant>
    <organismsDiffer>false</organismsDiffer>
    <experiments>3</experiments>
</comment>
<comment type="interaction">
    <interactant intactId="EBI-12891828">
        <id>Q6ZR37</id>
    </interactant>
    <interactant intactId="EBI-50433196">
        <id>A0A6Q8PF08</id>
        <label>PMP22</label>
    </interactant>
    <organismsDiffer>false</organismsDiffer>
    <experiments>3</experiments>
</comment>
<comment type="interaction">
    <interactant intactId="EBI-12891828">
        <id>Q6ZR37</id>
    </interactant>
    <interactant intactId="EBI-1237011">
        <id>P50897</id>
        <label>PPT1</label>
    </interactant>
    <organismsDiffer>false</organismsDiffer>
    <experiments>3</experiments>
</comment>
<comment type="interaction">
    <interactant intactId="EBI-12891828">
        <id>Q6ZR37</id>
    </interactant>
    <interactant intactId="EBI-1053424">
        <id>O43741</id>
        <label>PRKAB2</label>
    </interactant>
    <organismsDiffer>false</organismsDiffer>
    <experiments>3</experiments>
</comment>
<comment type="interaction">
    <interactant intactId="EBI-12891828">
        <id>Q6ZR37</id>
    </interactant>
    <interactant intactId="EBI-21251460">
        <id>O60260-5</id>
        <label>PRKN</label>
    </interactant>
    <organismsDiffer>false</organismsDiffer>
    <experiments>6</experiments>
</comment>
<comment type="interaction">
    <interactant intactId="EBI-12891828">
        <id>Q6ZR37</id>
    </interactant>
    <interactant intactId="EBI-1056089">
        <id>P51149</id>
        <label>RAB7A</label>
    </interactant>
    <organismsDiffer>false</organismsDiffer>
    <experiments>3</experiments>
</comment>
<comment type="interaction">
    <interactant intactId="EBI-12891828">
        <id>Q6ZR37</id>
    </interactant>
    <interactant intactId="EBI-396669">
        <id>Q9Y3C5</id>
        <label>RNF11</label>
    </interactant>
    <organismsDiffer>false</organismsDiffer>
    <experiments>3</experiments>
</comment>
<comment type="interaction">
    <interactant intactId="EBI-12891828">
        <id>Q6ZR37</id>
    </interactant>
    <interactant intactId="EBI-985879">
        <id>P37840</id>
        <label>SNCA</label>
    </interactant>
    <organismsDiffer>false</organismsDiffer>
    <experiments>3</experiments>
</comment>
<comment type="interaction">
    <interactant intactId="EBI-12891828">
        <id>Q6ZR37</id>
    </interactant>
    <interactant intactId="EBI-5235340">
        <id>Q7Z699</id>
        <label>SPRED1</label>
    </interactant>
    <organismsDiffer>false</organismsDiffer>
    <experiments>3</experiments>
</comment>
<comment type="interaction">
    <interactant intactId="EBI-12891828">
        <id>Q6ZR37</id>
    </interactant>
    <interactant intactId="EBI-25912901">
        <id>O15269-2</id>
        <label>SPTLC1</label>
    </interactant>
    <organismsDiffer>false</organismsDiffer>
    <experiments>3</experiments>
</comment>
<comment type="interaction">
    <interactant intactId="EBI-12891828">
        <id>Q6ZR37</id>
    </interactant>
    <interactant intactId="EBI-12806590">
        <id>Q86WV8</id>
        <label>TSC1</label>
    </interactant>
    <organismsDiffer>false</organismsDiffer>
    <experiments>3</experiments>
</comment>
<comment type="interaction">
    <interactant intactId="EBI-12891828">
        <id>Q6ZR37</id>
    </interactant>
    <interactant intactId="EBI-741480">
        <id>Q9UMX0</id>
        <label>UBQLN1</label>
    </interactant>
    <organismsDiffer>false</organismsDiffer>
    <experiments>3</experiments>
</comment>
<comment type="interaction">
    <interactant intactId="EBI-12891828">
        <id>Q6ZR37</id>
    </interactant>
    <interactant intactId="EBI-720609">
        <id>O76024</id>
        <label>WFS1</label>
    </interactant>
    <organismsDiffer>false</organismsDiffer>
    <experiments>3</experiments>
</comment>
<comment type="interaction">
    <interactant intactId="EBI-12891828">
        <id>Q6ZR37</id>
    </interactant>
    <interactant intactId="EBI-25900580">
        <id>Q9Y649</id>
    </interactant>
    <organismsDiffer>false</organismsDiffer>
    <experiments>3</experiments>
</comment>
<comment type="alternative products">
    <event type="alternative splicing"/>
    <isoform>
        <id>Q6ZR37-1</id>
        <name>1</name>
        <sequence type="displayed"/>
    </isoform>
    <isoform>
        <id>Q6ZR37-2</id>
        <name>2</name>
        <sequence type="described" ref="VSP_061135 VSP_061136"/>
    </isoform>
    <isoform>
        <id>Q6ZR37-3</id>
        <name>3</name>
        <sequence type="described" ref="VSP_061133 VSP_061134"/>
    </isoform>
</comment>
<comment type="sequence caution" evidence="5">
    <conflict type="erroneous initiation">
        <sequence resource="EMBL-CDS" id="AAI37087"/>
    </conflict>
    <text>Truncated N-terminus.</text>
</comment>
<comment type="sequence caution" evidence="5">
    <conflict type="erroneous initiation">
        <sequence resource="EMBL-CDS" id="BAC87483"/>
    </conflict>
    <text>Truncated N-terminus.</text>
</comment>
<accession>Q6ZR37</accession>
<accession>A0A1X7SBZ7</accession>
<accession>B2RNR7</accession>
<accession>F5H4P0</accession>
<accession>Q32Q52</accession>
<sequence length="691" mass="79526">MEKTESFCPEVPPQDCGASPRPSLRSLPKNQGSLLQFDRQAPGRISTSPTLRRLRTRGCGTRQDAWQVTTWGSWGAPVGFPCYLSKSLPGSPKDSSHLLSPLRLHSRLTSEPERALNAADSLEPQTRPTDKYLPPELQPVNEGSLHQASLRQQEGHFLPSPTLRHPSPQGEELHPSRFYEHRRSSVVLNLPGLEVFPGDLLVSDGAADYLCHPLLLLNSESKKPRWPFSKRGVGKDKHKHISDLENCLSSVKITSFRGYDFYGLKDKTWDEVLETHHKLPTDQLDLKKQQEAVWELFTSECTYFLDHLLVLKMIFMNTLRYLQTHEYLLDVDLWRLFANLEELTQTSLGFVNSLFGIIKDYVDASEISSSLDFISVLTKYFRGSLCQSHQTYCLNYSAAIFYLESLRQRDDFGIYLKWCEQNEQCRRLHVPELLVAPLQRLTRYPLLLKNIWKRSMDSAEKIMIYSIKEKVEKSIRDLEGKVKWLDNFQKFRYLQEIIVWPPLWDRDKRFFIPECLKHIFKEHMAENILSPTSRHLLYEGKLTLAESTRFLDVYLFLFNDFLLVTKTKCNKKKLGGSDPGLMCPSLTPELQAVIKEGGSCTVLDQPIPLDRLVVKSIEPLHVSVFGLRNAFLIQHENRYRQCIAAFLLQAQTENIKKTWMAQITTAISCFTKSQETKKISLFTLPAESSEI</sequence>
<reference key="1">
    <citation type="journal article" date="2006" name="Nature">
        <title>The finished DNA sequence of human chromosome 12.</title>
        <authorList>
            <person name="Scherer S.E."/>
            <person name="Muzny D.M."/>
            <person name="Buhay C.J."/>
            <person name="Chen R."/>
            <person name="Cree A."/>
            <person name="Ding Y."/>
            <person name="Dugan-Rocha S."/>
            <person name="Gill R."/>
            <person name="Gunaratne P."/>
            <person name="Harris R.A."/>
            <person name="Hawes A.C."/>
            <person name="Hernandez J."/>
            <person name="Hodgson A.V."/>
            <person name="Hume J."/>
            <person name="Jackson A."/>
            <person name="Khan Z.M."/>
            <person name="Kovar-Smith C."/>
            <person name="Lewis L.R."/>
            <person name="Lozado R.J."/>
            <person name="Metzker M.L."/>
            <person name="Milosavljevic A."/>
            <person name="Miner G.R."/>
            <person name="Montgomery K.T."/>
            <person name="Morgan M.B."/>
            <person name="Nazareth L.V."/>
            <person name="Scott G."/>
            <person name="Sodergren E."/>
            <person name="Song X.-Z."/>
            <person name="Steffen D."/>
            <person name="Lovering R.C."/>
            <person name="Wheeler D.A."/>
            <person name="Worley K.C."/>
            <person name="Yuan Y."/>
            <person name="Zhang Z."/>
            <person name="Adams C.Q."/>
            <person name="Ansari-Lari M.A."/>
            <person name="Ayele M."/>
            <person name="Brown M.J."/>
            <person name="Chen G."/>
            <person name="Chen Z."/>
            <person name="Clerc-Blankenburg K.P."/>
            <person name="Davis C."/>
            <person name="Delgado O."/>
            <person name="Dinh H.H."/>
            <person name="Draper H."/>
            <person name="Gonzalez-Garay M.L."/>
            <person name="Havlak P."/>
            <person name="Jackson L.R."/>
            <person name="Jacob L.S."/>
            <person name="Kelly S.H."/>
            <person name="Li L."/>
            <person name="Li Z."/>
            <person name="Liu J."/>
            <person name="Liu W."/>
            <person name="Lu J."/>
            <person name="Maheshwari M."/>
            <person name="Nguyen B.-V."/>
            <person name="Okwuonu G.O."/>
            <person name="Pasternak S."/>
            <person name="Perez L.M."/>
            <person name="Plopper F.J.H."/>
            <person name="Santibanez J."/>
            <person name="Shen H."/>
            <person name="Tabor P.E."/>
            <person name="Verduzco D."/>
            <person name="Waldron L."/>
            <person name="Wang Q."/>
            <person name="Williams G.A."/>
            <person name="Zhang J."/>
            <person name="Zhou J."/>
            <person name="Allen C.C."/>
            <person name="Amin A.G."/>
            <person name="Anyalebechi V."/>
            <person name="Bailey M."/>
            <person name="Barbaria J.A."/>
            <person name="Bimage K.E."/>
            <person name="Bryant N.P."/>
            <person name="Burch P.E."/>
            <person name="Burkett C.E."/>
            <person name="Burrell K.L."/>
            <person name="Calderon E."/>
            <person name="Cardenas V."/>
            <person name="Carter K."/>
            <person name="Casias K."/>
            <person name="Cavazos I."/>
            <person name="Cavazos S.R."/>
            <person name="Ceasar H."/>
            <person name="Chacko J."/>
            <person name="Chan S.N."/>
            <person name="Chavez D."/>
            <person name="Christopoulos C."/>
            <person name="Chu J."/>
            <person name="Cockrell R."/>
            <person name="Cox C.D."/>
            <person name="Dang M."/>
            <person name="Dathorne S.R."/>
            <person name="David R."/>
            <person name="Davis C.M."/>
            <person name="Davy-Carroll L."/>
            <person name="Deshazo D.R."/>
            <person name="Donlin J.E."/>
            <person name="D'Souza L."/>
            <person name="Eaves K.A."/>
            <person name="Egan A."/>
            <person name="Emery-Cohen A.J."/>
            <person name="Escotto M."/>
            <person name="Flagg N."/>
            <person name="Forbes L.D."/>
            <person name="Gabisi A.M."/>
            <person name="Garza M."/>
            <person name="Hamilton C."/>
            <person name="Henderson N."/>
            <person name="Hernandez O."/>
            <person name="Hines S."/>
            <person name="Hogues M.E."/>
            <person name="Huang M."/>
            <person name="Idlebird D.G."/>
            <person name="Johnson R."/>
            <person name="Jolivet A."/>
            <person name="Jones S."/>
            <person name="Kagan R."/>
            <person name="King L.M."/>
            <person name="Leal B."/>
            <person name="Lebow H."/>
            <person name="Lee S."/>
            <person name="LeVan J.M."/>
            <person name="Lewis L.C."/>
            <person name="London P."/>
            <person name="Lorensuhewa L.M."/>
            <person name="Loulseged H."/>
            <person name="Lovett D.A."/>
            <person name="Lucier A."/>
            <person name="Lucier R.L."/>
            <person name="Ma J."/>
            <person name="Madu R.C."/>
            <person name="Mapua P."/>
            <person name="Martindale A.D."/>
            <person name="Martinez E."/>
            <person name="Massey E."/>
            <person name="Mawhiney S."/>
            <person name="Meador M.G."/>
            <person name="Mendez S."/>
            <person name="Mercado C."/>
            <person name="Mercado I.C."/>
            <person name="Merritt C.E."/>
            <person name="Miner Z.L."/>
            <person name="Minja E."/>
            <person name="Mitchell T."/>
            <person name="Mohabbat F."/>
            <person name="Mohabbat K."/>
            <person name="Montgomery B."/>
            <person name="Moore N."/>
            <person name="Morris S."/>
            <person name="Munidasa M."/>
            <person name="Ngo R.N."/>
            <person name="Nguyen N.B."/>
            <person name="Nickerson E."/>
            <person name="Nwaokelemeh O.O."/>
            <person name="Nwokenkwo S."/>
            <person name="Obregon M."/>
            <person name="Oguh M."/>
            <person name="Oragunye N."/>
            <person name="Oviedo R.J."/>
            <person name="Parish B.J."/>
            <person name="Parker D.N."/>
            <person name="Parrish J."/>
            <person name="Parks K.L."/>
            <person name="Paul H.A."/>
            <person name="Payton B.A."/>
            <person name="Perez A."/>
            <person name="Perrin W."/>
            <person name="Pickens A."/>
            <person name="Primus E.L."/>
            <person name="Pu L.-L."/>
            <person name="Puazo M."/>
            <person name="Quiles M.M."/>
            <person name="Quiroz J.B."/>
            <person name="Rabata D."/>
            <person name="Reeves K."/>
            <person name="Ruiz S.J."/>
            <person name="Shao H."/>
            <person name="Sisson I."/>
            <person name="Sonaike T."/>
            <person name="Sorelle R.P."/>
            <person name="Sutton A.E."/>
            <person name="Svatek A.F."/>
            <person name="Svetz L.A."/>
            <person name="Tamerisa K.S."/>
            <person name="Taylor T.R."/>
            <person name="Teague B."/>
            <person name="Thomas N."/>
            <person name="Thorn R.D."/>
            <person name="Trejos Z.Y."/>
            <person name="Trevino B.K."/>
            <person name="Ukegbu O.N."/>
            <person name="Urban J.B."/>
            <person name="Vasquez L.I."/>
            <person name="Vera V.A."/>
            <person name="Villasana D.M."/>
            <person name="Wang L."/>
            <person name="Ward-Moore S."/>
            <person name="Warren J.T."/>
            <person name="Wei X."/>
            <person name="White F."/>
            <person name="Williamson A.L."/>
            <person name="Wleczyk R."/>
            <person name="Wooden H.S."/>
            <person name="Wooden S.H."/>
            <person name="Yen J."/>
            <person name="Yoon L."/>
            <person name="Yoon V."/>
            <person name="Zorrilla S.E."/>
            <person name="Nelson D."/>
            <person name="Kucherlapati R."/>
            <person name="Weinstock G."/>
            <person name="Gibbs R.A."/>
        </authorList>
    </citation>
    <scope>NUCLEOTIDE SEQUENCE [LARGE SCALE GENOMIC DNA]</scope>
</reference>
<reference key="2">
    <citation type="journal article" date="2004" name="Genome Res.">
        <title>The status, quality, and expansion of the NIH full-length cDNA project: the Mammalian Gene Collection (MGC).</title>
        <authorList>
            <consortium name="The MGC Project Team"/>
        </authorList>
    </citation>
    <scope>NUCLEOTIDE SEQUENCE [LARGE SCALE MRNA] (ISOFORMS 2 AND 3)</scope>
    <scope>NUCLEOTIDE SEQUENCE [LARGE SCALE MRNA] OF 276-691 (ISOFORM 1)</scope>
    <source>
        <tissue>Lung</tissue>
    </source>
</reference>
<reference key="3">
    <citation type="journal article" date="2004" name="Nat. Genet.">
        <title>Complete sequencing and characterization of 21,243 full-length human cDNAs.</title>
        <authorList>
            <person name="Ota T."/>
            <person name="Suzuki Y."/>
            <person name="Nishikawa T."/>
            <person name="Otsuki T."/>
            <person name="Sugiyama T."/>
            <person name="Irie R."/>
            <person name="Wakamatsu A."/>
            <person name="Hayashi K."/>
            <person name="Sato H."/>
            <person name="Nagai K."/>
            <person name="Kimura K."/>
            <person name="Makita H."/>
            <person name="Sekine M."/>
            <person name="Obayashi M."/>
            <person name="Nishi T."/>
            <person name="Shibahara T."/>
            <person name="Tanaka T."/>
            <person name="Ishii S."/>
            <person name="Yamamoto J."/>
            <person name="Saito K."/>
            <person name="Kawai Y."/>
            <person name="Isono Y."/>
            <person name="Nakamura Y."/>
            <person name="Nagahari K."/>
            <person name="Murakami K."/>
            <person name="Yasuda T."/>
            <person name="Iwayanagi T."/>
            <person name="Wagatsuma M."/>
            <person name="Shiratori A."/>
            <person name="Sudo H."/>
            <person name="Hosoiri T."/>
            <person name="Kaku Y."/>
            <person name="Kodaira H."/>
            <person name="Kondo H."/>
            <person name="Sugawara M."/>
            <person name="Takahashi M."/>
            <person name="Kanda K."/>
            <person name="Yokoi T."/>
            <person name="Furuya T."/>
            <person name="Kikkawa E."/>
            <person name="Omura Y."/>
            <person name="Abe K."/>
            <person name="Kamihara K."/>
            <person name="Katsuta N."/>
            <person name="Sato K."/>
            <person name="Tanikawa M."/>
            <person name="Yamazaki M."/>
            <person name="Ninomiya K."/>
            <person name="Ishibashi T."/>
            <person name="Yamashita H."/>
            <person name="Murakawa K."/>
            <person name="Fujimori K."/>
            <person name="Tanai H."/>
            <person name="Kimata M."/>
            <person name="Watanabe M."/>
            <person name="Hiraoka S."/>
            <person name="Chiba Y."/>
            <person name="Ishida S."/>
            <person name="Ono Y."/>
            <person name="Takiguchi S."/>
            <person name="Watanabe S."/>
            <person name="Yosida M."/>
            <person name="Hotuta T."/>
            <person name="Kusano J."/>
            <person name="Kanehori K."/>
            <person name="Takahashi-Fujii A."/>
            <person name="Hara H."/>
            <person name="Tanase T.-O."/>
            <person name="Nomura Y."/>
            <person name="Togiya S."/>
            <person name="Komai F."/>
            <person name="Hara R."/>
            <person name="Takeuchi K."/>
            <person name="Arita M."/>
            <person name="Imose N."/>
            <person name="Musashino K."/>
            <person name="Yuuki H."/>
            <person name="Oshima A."/>
            <person name="Sasaki N."/>
            <person name="Aotsuka S."/>
            <person name="Yoshikawa Y."/>
            <person name="Matsunawa H."/>
            <person name="Ichihara T."/>
            <person name="Shiohata N."/>
            <person name="Sano S."/>
            <person name="Moriya S."/>
            <person name="Momiyama H."/>
            <person name="Satoh N."/>
            <person name="Takami S."/>
            <person name="Terashima Y."/>
            <person name="Suzuki O."/>
            <person name="Nakagawa S."/>
            <person name="Senoh A."/>
            <person name="Mizoguchi H."/>
            <person name="Goto Y."/>
            <person name="Shimizu F."/>
            <person name="Wakebe H."/>
            <person name="Hishigaki H."/>
            <person name="Watanabe T."/>
            <person name="Sugiyama A."/>
            <person name="Takemoto M."/>
            <person name="Kawakami B."/>
            <person name="Yamazaki M."/>
            <person name="Watanabe K."/>
            <person name="Kumagai A."/>
            <person name="Itakura S."/>
            <person name="Fukuzumi Y."/>
            <person name="Fujimori Y."/>
            <person name="Komiyama M."/>
            <person name="Tashiro H."/>
            <person name="Tanigami A."/>
            <person name="Fujiwara T."/>
            <person name="Ono T."/>
            <person name="Yamada K."/>
            <person name="Fujii Y."/>
            <person name="Ozaki K."/>
            <person name="Hirao M."/>
            <person name="Ohmori Y."/>
            <person name="Kawabata A."/>
            <person name="Hikiji T."/>
            <person name="Kobatake N."/>
            <person name="Inagaki H."/>
            <person name="Ikema Y."/>
            <person name="Okamoto S."/>
            <person name="Okitani R."/>
            <person name="Kawakami T."/>
            <person name="Noguchi S."/>
            <person name="Itoh T."/>
            <person name="Shigeta K."/>
            <person name="Senba T."/>
            <person name="Matsumura K."/>
            <person name="Nakajima Y."/>
            <person name="Mizuno T."/>
            <person name="Morinaga M."/>
            <person name="Sasaki M."/>
            <person name="Togashi T."/>
            <person name="Oyama M."/>
            <person name="Hata H."/>
            <person name="Watanabe M."/>
            <person name="Komatsu T."/>
            <person name="Mizushima-Sugano J."/>
            <person name="Satoh T."/>
            <person name="Shirai Y."/>
            <person name="Takahashi Y."/>
            <person name="Nakagawa K."/>
            <person name="Okumura K."/>
            <person name="Nagase T."/>
            <person name="Nomura N."/>
            <person name="Kikuchi H."/>
            <person name="Masuho Y."/>
            <person name="Yamashita R."/>
            <person name="Nakai K."/>
            <person name="Yada T."/>
            <person name="Nakamura Y."/>
            <person name="Ohara O."/>
            <person name="Isogai T."/>
            <person name="Sugano S."/>
        </authorList>
    </citation>
    <scope>NUCLEOTIDE SEQUENCE [LARGE SCALE MRNA] OF 252-691 (ISOFORM 1)</scope>
    <source>
        <tissue>Trachea</tissue>
    </source>
</reference>